<proteinExistence type="inferred from homology"/>
<dbReference type="EMBL" id="CP000606">
    <property type="protein sequence ID" value="ABO22741.1"/>
    <property type="molecule type" value="Genomic_DNA"/>
</dbReference>
<dbReference type="RefSeq" id="WP_011864675.1">
    <property type="nucleotide sequence ID" value="NC_009092.1"/>
</dbReference>
<dbReference type="SMR" id="A3QB93"/>
<dbReference type="STRING" id="323850.Shew_0869"/>
<dbReference type="KEGG" id="slo:Shew_0869"/>
<dbReference type="eggNOG" id="COG0261">
    <property type="taxonomic scope" value="Bacteria"/>
</dbReference>
<dbReference type="HOGENOM" id="CLU_061463_3_3_6"/>
<dbReference type="OrthoDB" id="9813334at2"/>
<dbReference type="Proteomes" id="UP000001558">
    <property type="component" value="Chromosome"/>
</dbReference>
<dbReference type="GO" id="GO:0005737">
    <property type="term" value="C:cytoplasm"/>
    <property type="evidence" value="ECO:0007669"/>
    <property type="project" value="UniProtKB-ARBA"/>
</dbReference>
<dbReference type="GO" id="GO:1990904">
    <property type="term" value="C:ribonucleoprotein complex"/>
    <property type="evidence" value="ECO:0007669"/>
    <property type="project" value="UniProtKB-KW"/>
</dbReference>
<dbReference type="GO" id="GO:0005840">
    <property type="term" value="C:ribosome"/>
    <property type="evidence" value="ECO:0007669"/>
    <property type="project" value="UniProtKB-KW"/>
</dbReference>
<dbReference type="GO" id="GO:0019843">
    <property type="term" value="F:rRNA binding"/>
    <property type="evidence" value="ECO:0007669"/>
    <property type="project" value="UniProtKB-UniRule"/>
</dbReference>
<dbReference type="GO" id="GO:0003735">
    <property type="term" value="F:structural constituent of ribosome"/>
    <property type="evidence" value="ECO:0007669"/>
    <property type="project" value="InterPro"/>
</dbReference>
<dbReference type="GO" id="GO:0006412">
    <property type="term" value="P:translation"/>
    <property type="evidence" value="ECO:0007669"/>
    <property type="project" value="UniProtKB-UniRule"/>
</dbReference>
<dbReference type="HAMAP" id="MF_01363">
    <property type="entry name" value="Ribosomal_bL21"/>
    <property type="match status" value="1"/>
</dbReference>
<dbReference type="InterPro" id="IPR028909">
    <property type="entry name" value="bL21-like"/>
</dbReference>
<dbReference type="InterPro" id="IPR036164">
    <property type="entry name" value="bL21-like_sf"/>
</dbReference>
<dbReference type="InterPro" id="IPR001787">
    <property type="entry name" value="Ribosomal_bL21"/>
</dbReference>
<dbReference type="InterPro" id="IPR018258">
    <property type="entry name" value="Ribosomal_bL21_CS"/>
</dbReference>
<dbReference type="NCBIfam" id="TIGR00061">
    <property type="entry name" value="L21"/>
    <property type="match status" value="1"/>
</dbReference>
<dbReference type="PANTHER" id="PTHR21349">
    <property type="entry name" value="50S RIBOSOMAL PROTEIN L21"/>
    <property type="match status" value="1"/>
</dbReference>
<dbReference type="PANTHER" id="PTHR21349:SF0">
    <property type="entry name" value="LARGE RIBOSOMAL SUBUNIT PROTEIN BL21M"/>
    <property type="match status" value="1"/>
</dbReference>
<dbReference type="Pfam" id="PF00829">
    <property type="entry name" value="Ribosomal_L21p"/>
    <property type="match status" value="1"/>
</dbReference>
<dbReference type="SUPFAM" id="SSF141091">
    <property type="entry name" value="L21p-like"/>
    <property type="match status" value="1"/>
</dbReference>
<dbReference type="PROSITE" id="PS01169">
    <property type="entry name" value="RIBOSOMAL_L21"/>
    <property type="match status" value="1"/>
</dbReference>
<evidence type="ECO:0000255" key="1">
    <source>
        <dbReference type="HAMAP-Rule" id="MF_01363"/>
    </source>
</evidence>
<evidence type="ECO:0000305" key="2"/>
<name>RL21_SHELP</name>
<keyword id="KW-1185">Reference proteome</keyword>
<keyword id="KW-0687">Ribonucleoprotein</keyword>
<keyword id="KW-0689">Ribosomal protein</keyword>
<keyword id="KW-0694">RNA-binding</keyword>
<keyword id="KW-0699">rRNA-binding</keyword>
<reference key="1">
    <citation type="submission" date="2007-03" db="EMBL/GenBank/DDBJ databases">
        <title>Complete sequence of Shewanella loihica PV-4.</title>
        <authorList>
            <consortium name="US DOE Joint Genome Institute"/>
            <person name="Copeland A."/>
            <person name="Lucas S."/>
            <person name="Lapidus A."/>
            <person name="Barry K."/>
            <person name="Detter J.C."/>
            <person name="Glavina del Rio T."/>
            <person name="Hammon N."/>
            <person name="Israni S."/>
            <person name="Dalin E."/>
            <person name="Tice H."/>
            <person name="Pitluck S."/>
            <person name="Chain P."/>
            <person name="Malfatti S."/>
            <person name="Shin M."/>
            <person name="Vergez L."/>
            <person name="Schmutz J."/>
            <person name="Larimer F."/>
            <person name="Land M."/>
            <person name="Hauser L."/>
            <person name="Kyrpides N."/>
            <person name="Mikhailova N."/>
            <person name="Romine M.F."/>
            <person name="Serres G."/>
            <person name="Fredrickson J."/>
            <person name="Tiedje J."/>
            <person name="Richardson P."/>
        </authorList>
    </citation>
    <scope>NUCLEOTIDE SEQUENCE [LARGE SCALE GENOMIC DNA]</scope>
    <source>
        <strain>ATCC BAA-1088 / PV-4</strain>
    </source>
</reference>
<comment type="function">
    <text evidence="1">This protein binds to 23S rRNA in the presence of protein L20.</text>
</comment>
<comment type="subunit">
    <text evidence="1">Part of the 50S ribosomal subunit. Contacts protein L20.</text>
</comment>
<comment type="similarity">
    <text evidence="1">Belongs to the bacterial ribosomal protein bL21 family.</text>
</comment>
<protein>
    <recommendedName>
        <fullName evidence="1">Large ribosomal subunit protein bL21</fullName>
    </recommendedName>
    <alternativeName>
        <fullName evidence="2">50S ribosomal protein L21</fullName>
    </alternativeName>
</protein>
<accession>A3QB93</accession>
<sequence>MYAVFQSGGKQHRVAEGHTVRLEKLEVATGETIEFDQVLLVADGETVHVGAPLVEGGKVVAEVISHGRGEKVTIVKFRRRKHHDKKMGHRQWFTEVKITAINA</sequence>
<gene>
    <name evidence="1" type="primary">rplU</name>
    <name type="ordered locus">Shew_0869</name>
</gene>
<organism>
    <name type="scientific">Shewanella loihica (strain ATCC BAA-1088 / PV-4)</name>
    <dbReference type="NCBI Taxonomy" id="323850"/>
    <lineage>
        <taxon>Bacteria</taxon>
        <taxon>Pseudomonadati</taxon>
        <taxon>Pseudomonadota</taxon>
        <taxon>Gammaproteobacteria</taxon>
        <taxon>Alteromonadales</taxon>
        <taxon>Shewanellaceae</taxon>
        <taxon>Shewanella</taxon>
    </lineage>
</organism>
<feature type="chain" id="PRO_1000067896" description="Large ribosomal subunit protein bL21">
    <location>
        <begin position="1"/>
        <end position="103"/>
    </location>
</feature>